<evidence type="ECO:0000255" key="1"/>
<evidence type="ECO:0000255" key="2">
    <source>
        <dbReference type="PROSITE-ProRule" id="PRU00114"/>
    </source>
</evidence>
<evidence type="ECO:0000303" key="3">
    <source>
    </source>
</evidence>
<evidence type="ECO:0000303" key="4">
    <source>
    </source>
</evidence>
<evidence type="ECO:0000303" key="5">
    <source>
    </source>
</evidence>
<evidence type="ECO:0000303" key="6">
    <source>
    </source>
</evidence>
<evidence type="ECO:0000303" key="7">
    <source>
    </source>
</evidence>
<evidence type="ECO:0000303" key="8">
    <source>
    </source>
</evidence>
<evidence type="ECO:0000303" key="9">
    <source ref="3"/>
</evidence>
<evidence type="ECO:0000305" key="10"/>
<dbReference type="EMBL" id="L36092">
    <property type="protein sequence ID" value="AAC80190.1"/>
    <property type="molecule type" value="Genomic_DNA"/>
</dbReference>
<dbReference type="EMBL" id="AC245088">
    <property type="status" value="NOT_ANNOTATED_CDS"/>
    <property type="molecule type" value="Genomic_DNA"/>
</dbReference>
<dbReference type="SMR" id="A0A576"/>
<dbReference type="FunCoup" id="A0A576">
    <property type="interactions" value="417"/>
</dbReference>
<dbReference type="IMGT_GENE-DB" id="TRBV3-1"/>
<dbReference type="GlyCosmos" id="A0A576">
    <property type="glycosylation" value="1 site, No reported glycans"/>
</dbReference>
<dbReference type="GlyGen" id="A0A576">
    <property type="glycosylation" value="1 site"/>
</dbReference>
<dbReference type="BioMuta" id="TRBV3-1"/>
<dbReference type="MassIVE" id="A0A576"/>
<dbReference type="Ensembl" id="ENST00000390387.3">
    <property type="protein sequence ID" value="ENSP00000374910.3"/>
    <property type="gene ID" value="ENSG00000237702.2"/>
</dbReference>
<dbReference type="Ensembl" id="ENST00000632422.1">
    <property type="protein sequence ID" value="ENSP00000488814.1"/>
    <property type="gene ID" value="ENSG00000282624.1"/>
</dbReference>
<dbReference type="UCSC" id="uc022amz.3">
    <property type="organism name" value="human"/>
</dbReference>
<dbReference type="AGR" id="HGNC:12212"/>
<dbReference type="GeneCards" id="TRBV3-1"/>
<dbReference type="HGNC" id="HGNC:12212">
    <property type="gene designation" value="TRBV3-1"/>
</dbReference>
<dbReference type="HPA" id="ENSG00000237702">
    <property type="expression patterns" value="Tissue enriched (lymphoid)"/>
</dbReference>
<dbReference type="neXtProt" id="NX_A0A576"/>
<dbReference type="OpenTargets" id="ENSG00000237702"/>
<dbReference type="VEuPathDB" id="HostDB:ENSG00000237702"/>
<dbReference type="GeneTree" id="ENSGT00940000164097"/>
<dbReference type="HOGENOM" id="CLU_077975_9_1_1"/>
<dbReference type="InParanoid" id="A0A576"/>
<dbReference type="OMA" id="HISSAKX"/>
<dbReference type="OrthoDB" id="9527848at2759"/>
<dbReference type="PAN-GO" id="A0A576">
    <property type="GO annotations" value="2 GO annotations based on evolutionary models"/>
</dbReference>
<dbReference type="PhylomeDB" id="A0A576"/>
<dbReference type="ChiTaRS" id="TRBV3-1">
    <property type="organism name" value="human"/>
</dbReference>
<dbReference type="Pharos" id="A0A576">
    <property type="development level" value="Tdark"/>
</dbReference>
<dbReference type="PRO" id="PR:A0A576"/>
<dbReference type="Proteomes" id="UP000005640">
    <property type="component" value="Chromosome 7"/>
</dbReference>
<dbReference type="RNAct" id="A0A576">
    <property type="molecule type" value="protein"/>
</dbReference>
<dbReference type="Bgee" id="ENSG00000237702">
    <property type="expression patterns" value="Expressed in granulocyte and 80 other cell types or tissues"/>
</dbReference>
<dbReference type="GO" id="GO:0005886">
    <property type="term" value="C:plasma membrane"/>
    <property type="evidence" value="ECO:0000318"/>
    <property type="project" value="GO_Central"/>
</dbReference>
<dbReference type="GO" id="GO:0042101">
    <property type="term" value="C:T cell receptor complex"/>
    <property type="evidence" value="ECO:0007669"/>
    <property type="project" value="UniProtKB-KW"/>
</dbReference>
<dbReference type="GO" id="GO:0002250">
    <property type="term" value="P:adaptive immune response"/>
    <property type="evidence" value="ECO:0007669"/>
    <property type="project" value="UniProtKB-KW"/>
</dbReference>
<dbReference type="GO" id="GO:0007166">
    <property type="term" value="P:cell surface receptor signaling pathway"/>
    <property type="evidence" value="ECO:0000318"/>
    <property type="project" value="GO_Central"/>
</dbReference>
<dbReference type="Gene3D" id="2.60.40.10">
    <property type="entry name" value="Immunoglobulins"/>
    <property type="match status" value="1"/>
</dbReference>
<dbReference type="InterPro" id="IPR007110">
    <property type="entry name" value="Ig-like_dom"/>
</dbReference>
<dbReference type="InterPro" id="IPR036179">
    <property type="entry name" value="Ig-like_dom_sf"/>
</dbReference>
<dbReference type="InterPro" id="IPR013783">
    <property type="entry name" value="Ig-like_fold"/>
</dbReference>
<dbReference type="InterPro" id="IPR013106">
    <property type="entry name" value="Ig_V-set"/>
</dbReference>
<dbReference type="InterPro" id="IPR050413">
    <property type="entry name" value="TCR_beta_variable"/>
</dbReference>
<dbReference type="PANTHER" id="PTHR23268:SF92">
    <property type="entry name" value="T CELL RECEPTOR BETA VARIABLE 3-1"/>
    <property type="match status" value="1"/>
</dbReference>
<dbReference type="PANTHER" id="PTHR23268">
    <property type="entry name" value="T-CELL RECEPTOR BETA CHAIN"/>
    <property type="match status" value="1"/>
</dbReference>
<dbReference type="Pfam" id="PF07686">
    <property type="entry name" value="V-set"/>
    <property type="match status" value="1"/>
</dbReference>
<dbReference type="SUPFAM" id="SSF48726">
    <property type="entry name" value="Immunoglobulin"/>
    <property type="match status" value="1"/>
</dbReference>
<dbReference type="PROSITE" id="PS50835">
    <property type="entry name" value="IG_LIKE"/>
    <property type="match status" value="1"/>
</dbReference>
<accession>A0A576</accession>
<proteinExistence type="evidence at protein level"/>
<comment type="function">
    <text evidence="3 5 6 7">V region of the variable domain of T cell receptor (TR) beta chain that participates in the antigen recognition (PubMed:24600447). Alpha-beta T cell receptors are antigen specific receptors which are essential to the immune response and are present on the cell surface of T lymphocytes. Recognize peptide-major histocompatibility (MH) (pMH) complexes that are displayed by antigen presenting cells (APC), a prerequisite for efficient T cell adaptive immunity against pathogens (PubMed:25493333). Binding of alpha-beta TR to pMH complex initiates TR-CD3 clustering on the cell surface and intracellular activation of LCK that phosphorylates the ITAM motifs of CD3G, CD3D, CD3E and CD247 enabling the recruitment of ZAP70. In turn ZAP70 phosphorylates LAT, which recruits numerous signaling molecules to form the LAT signalosome. The LAT signalosome propagates signal branching to three major signaling pathways, the calcium, the mitogen-activated protein kinase (MAPK) kinase and the nuclear factor NF-kappa-B (NF-kB) pathways, leading to the mobilization of transcription factors that are critical for gene expression and essential for T cell growth and differentiation (PubMed:23524462). The T cell repertoire is generated in the thymus, by V-(D)-J rearrangement. This repertoire is then shaped by intrathymic selection events to generate a peripheral T cell pool of self-MH restricted, non-autoaggressive T cells. Post-thymic interaction of alpha-beta TR with the pMH complexes shapes TR structural and functional avidity (PubMed:15040585).</text>
</comment>
<comment type="subunit">
    <text evidence="4">Alpha-beta TR is a heterodimer composed of an alpha and beta chain; disulfide-linked. The alpha-beta TR is associated with the transmembrane signaling CD3 coreceptor proteins to form the TR-CD3 (TcR or TCR). The assembly of alpha-beta TR heterodimers with CD3 occurs in the endoplasmic reticulum where a single alpha-beta TR heterodimer associates with one CD3D-CD3E heterodimer, one CD3G-CD3E heterodimer and one CD247 homodimer forming a stable octameric structure. CD3D-CD3E and CD3G-CD3E heterodimers preferentially associate with TR alpha and TR beta chains, respectively. The association of the CD247 homodimer is the last step of TcR assembly in the endoplasmic reticulum and is required for transport to the cell surface.</text>
</comment>
<comment type="subcellular location">
    <subcellularLocation>
        <location evidence="4">Cell membrane</location>
    </subcellularLocation>
</comment>
<comment type="polymorphism">
    <text evidence="10">There are several alleles. The sequence shown is that of IMGT allele TRBV3-1*01.</text>
</comment>
<feature type="signal peptide" evidence="1">
    <location>
        <begin position="1"/>
        <end position="21"/>
    </location>
</feature>
<feature type="chain" id="PRO_5010101716" description="T cell receptor beta variable 3-1" evidence="1">
    <location>
        <begin position="22"/>
        <end position="114"/>
    </location>
</feature>
<feature type="domain" description="Ig-like" evidence="2">
    <location>
        <begin position="22"/>
        <end position="114" status="greater than"/>
    </location>
</feature>
<feature type="glycosylation site" description="N-linked (GlcNAc...) asparagine" evidence="1">
    <location>
        <position position="76"/>
    </location>
</feature>
<feature type="disulfide bond" evidence="2">
    <location>
        <begin position="42"/>
        <end position="110"/>
    </location>
</feature>
<feature type="non-terminal residue">
    <location>
        <position position="114"/>
    </location>
</feature>
<name>TVB31_HUMAN</name>
<reference key="1">
    <citation type="journal article" date="1996" name="Science">
        <title>The complete 685-kilobase DNA sequence of the human beta T cell receptor locus.</title>
        <authorList>
            <person name="Rowen L."/>
            <person name="Koop B.F."/>
            <person name="Hood L."/>
        </authorList>
    </citation>
    <scope>NUCLEOTIDE SEQUENCE [GENOMIC DNA] (IMGT ALLELE TRBV3-1*01)</scope>
</reference>
<reference key="2">
    <citation type="journal article" date="2003" name="Nature">
        <title>The DNA sequence of human chromosome 7.</title>
        <authorList>
            <person name="Hillier L.W."/>
            <person name="Fulton R.S."/>
            <person name="Fulton L.A."/>
            <person name="Graves T.A."/>
            <person name="Pepin K.H."/>
            <person name="Wagner-McPherson C."/>
            <person name="Layman D."/>
            <person name="Maas J."/>
            <person name="Jaeger S."/>
            <person name="Walker R."/>
            <person name="Wylie K."/>
            <person name="Sekhon M."/>
            <person name="Becker M.C."/>
            <person name="O'Laughlin M.D."/>
            <person name="Schaller M.E."/>
            <person name="Fewell G.A."/>
            <person name="Delehaunty K.D."/>
            <person name="Miner T.L."/>
            <person name="Nash W.E."/>
            <person name="Cordes M."/>
            <person name="Du H."/>
            <person name="Sun H."/>
            <person name="Edwards J."/>
            <person name="Bradshaw-Cordum H."/>
            <person name="Ali J."/>
            <person name="Andrews S."/>
            <person name="Isak A."/>
            <person name="Vanbrunt A."/>
            <person name="Nguyen C."/>
            <person name="Du F."/>
            <person name="Lamar B."/>
            <person name="Courtney L."/>
            <person name="Kalicki J."/>
            <person name="Ozersky P."/>
            <person name="Bielicki L."/>
            <person name="Scott K."/>
            <person name="Holmes A."/>
            <person name="Harkins R."/>
            <person name="Harris A."/>
            <person name="Strong C.M."/>
            <person name="Hou S."/>
            <person name="Tomlinson C."/>
            <person name="Dauphin-Kohlberg S."/>
            <person name="Kozlowicz-Reilly A."/>
            <person name="Leonard S."/>
            <person name="Rohlfing T."/>
            <person name="Rock S.M."/>
            <person name="Tin-Wollam A.-M."/>
            <person name="Abbott A."/>
            <person name="Minx P."/>
            <person name="Maupin R."/>
            <person name="Strowmatt C."/>
            <person name="Latreille P."/>
            <person name="Miller N."/>
            <person name="Johnson D."/>
            <person name="Murray J."/>
            <person name="Woessner J.P."/>
            <person name="Wendl M.C."/>
            <person name="Yang S.-P."/>
            <person name="Schultz B.R."/>
            <person name="Wallis J.W."/>
            <person name="Spieth J."/>
            <person name="Bieri T.A."/>
            <person name="Nelson J.O."/>
            <person name="Berkowicz N."/>
            <person name="Wohldmann P.E."/>
            <person name="Cook L.L."/>
            <person name="Hickenbotham M.T."/>
            <person name="Eldred J."/>
            <person name="Williams D."/>
            <person name="Bedell J.A."/>
            <person name="Mardis E.R."/>
            <person name="Clifton S.W."/>
            <person name="Chissoe S.L."/>
            <person name="Marra M.A."/>
            <person name="Raymond C."/>
            <person name="Haugen E."/>
            <person name="Gillett W."/>
            <person name="Zhou Y."/>
            <person name="James R."/>
            <person name="Phelps K."/>
            <person name="Iadanoto S."/>
            <person name="Bubb K."/>
            <person name="Simms E."/>
            <person name="Levy R."/>
            <person name="Clendenning J."/>
            <person name="Kaul R."/>
            <person name="Kent W.J."/>
            <person name="Furey T.S."/>
            <person name="Baertsch R.A."/>
            <person name="Brent M.R."/>
            <person name="Keibler E."/>
            <person name="Flicek P."/>
            <person name="Bork P."/>
            <person name="Suyama M."/>
            <person name="Bailey J.A."/>
            <person name="Portnoy M.E."/>
            <person name="Torrents D."/>
            <person name="Chinwalla A.T."/>
            <person name="Gish W.R."/>
            <person name="Eddy S.R."/>
            <person name="McPherson J.D."/>
            <person name="Olson M.V."/>
            <person name="Eichler E.E."/>
            <person name="Green E.D."/>
            <person name="Waterston R.H."/>
            <person name="Wilson R.K."/>
        </authorList>
    </citation>
    <scope>NUCLEOTIDE SEQUENCE [LARGE SCALE GENOMIC DNA] (IMGT ALLELE TRBV3-1*01)</scope>
</reference>
<reference key="3">
    <citation type="book" date="2001" name="The T Cell Receptor FactsBook.">
        <title>The T Cell Receptor FactsBook.</title>
        <editorList>
            <person name="Lefranc M.P."/>
            <person name="Lefranc G."/>
        </editorList>
        <authorList>
            <person name="Lefranc M.P."/>
            <person name="Lefranc G."/>
        </authorList>
    </citation>
    <scope>NOMENCLATURE</scope>
</reference>
<reference key="4">
    <citation type="journal article" date="2004" name="Nat. Rev. Immunol.">
        <title>The many important facets of T-cell repertoire diversity.</title>
        <authorList>
            <person name="Nikolich-Zugich J."/>
            <person name="Slifka M.K."/>
            <person name="Messaoudi I."/>
        </authorList>
    </citation>
    <scope>REVIEW ON T CELL REPERTOIRE DIVERSITY</scope>
</reference>
<reference key="5">
    <citation type="journal article" date="2010" name="Cold Spring Harb. Perspect. Biol.">
        <title>Structural biology of the T-cell receptor: insights into receptor assembly, ligand recognition, and initiation of signaling.</title>
        <authorList>
            <person name="Wucherpfennig K.W."/>
            <person name="Gagnon E."/>
            <person name="Call M.J."/>
            <person name="Huseby E.S."/>
            <person name="Call M.E."/>
        </authorList>
    </citation>
    <scope>REVIEW ON T CELL RECEPTOR-CD3 COMPLEX ASSEMBLY</scope>
    <scope>SUBCELLULAR LOCATION</scope>
</reference>
<reference key="6">
    <citation type="journal article" date="2013" name="Nat. Rev. Immunol.">
        <title>T cell receptor signalling networks: branched, diversified and bounded.</title>
        <authorList>
            <person name="Brownlie R.J."/>
            <person name="Zamoyska R."/>
        </authorList>
    </citation>
    <scope>REVIEW ON T CELL RECEPTOR SIGNALING</scope>
</reference>
<reference key="7">
    <citation type="journal article" date="2014" name="Front. Immunol.">
        <title>Immunoglobulin and T Cell Receptor Genes: IMGT((R)) and the Birth and Rise of Immunoinformatics.</title>
        <authorList>
            <person name="Lefranc M.P."/>
        </authorList>
    </citation>
    <scope>NOMENCLATURE</scope>
</reference>
<reference key="8">
    <citation type="journal article" date="2015" name="Annu. Rev. Immunol.">
        <title>T cell antigen receptor recognition of antigen-presenting molecules.</title>
        <authorList>
            <person name="Rossjohn J."/>
            <person name="Gras S."/>
            <person name="Miles J.J."/>
            <person name="Turner S.J."/>
            <person name="Godfrey D.I."/>
            <person name="McCluskey J."/>
        </authorList>
    </citation>
    <scope>REVIEW ON FUNCTION</scope>
</reference>
<sequence length="114" mass="12928">MGCRLLCCVVFCLLQAGPLDTAVSQTPKYLVTQMGNDKSIKCEQNLGHDTMYWYKQDSKKFLKIMFSYNNKELIINETVPNRFSPKSPDKAHLNLHINSLELGDSAVYFCASSQ</sequence>
<organism>
    <name type="scientific">Homo sapiens</name>
    <name type="common">Human</name>
    <dbReference type="NCBI Taxonomy" id="9606"/>
    <lineage>
        <taxon>Eukaryota</taxon>
        <taxon>Metazoa</taxon>
        <taxon>Chordata</taxon>
        <taxon>Craniata</taxon>
        <taxon>Vertebrata</taxon>
        <taxon>Euteleostomi</taxon>
        <taxon>Mammalia</taxon>
        <taxon>Eutheria</taxon>
        <taxon>Euarchontoglires</taxon>
        <taxon>Primates</taxon>
        <taxon>Haplorrhini</taxon>
        <taxon>Catarrhini</taxon>
        <taxon>Hominidae</taxon>
        <taxon>Homo</taxon>
    </lineage>
</organism>
<gene>
    <name evidence="9" type="primary">TRBV3-1</name>
    <name evidence="8" type="synonym">TCRBV9S1A1T</name>
</gene>
<protein>
    <recommendedName>
        <fullName evidence="9">T cell receptor beta variable 3-1</fullName>
    </recommendedName>
</protein>
<keyword id="KW-1064">Adaptive immunity</keyword>
<keyword id="KW-1003">Cell membrane</keyword>
<keyword id="KW-1015">Disulfide bond</keyword>
<keyword id="KW-0325">Glycoprotein</keyword>
<keyword id="KW-0391">Immunity</keyword>
<keyword id="KW-0393">Immunoglobulin domain</keyword>
<keyword id="KW-0472">Membrane</keyword>
<keyword id="KW-1267">Proteomics identification</keyword>
<keyword id="KW-0675">Receptor</keyword>
<keyword id="KW-1185">Reference proteome</keyword>
<keyword id="KW-0732">Signal</keyword>
<keyword id="KW-1279">T cell receptor</keyword>